<proteinExistence type="inferred from homology"/>
<name>RR15_PHAAO</name>
<accession>Q3BAH6</accession>
<sequence length="91" mass="10860">MVKKNSFISVITQEEKEENSGSVEFQVFHFTSKIRRLTSHLELHKRDFLSQKGLRIILGKRQRLLTYLSKKNKVRYKKLTDQLNIREPKIS</sequence>
<dbReference type="EMBL" id="AY916449">
    <property type="protein sequence ID" value="AAW82548.1"/>
    <property type="molecule type" value="Genomic_DNA"/>
</dbReference>
<dbReference type="RefSeq" id="YP_358642.1">
    <property type="nucleotide sequence ID" value="NC_007499.1"/>
</dbReference>
<dbReference type="SMR" id="Q3BAH6"/>
<dbReference type="GeneID" id="3741741"/>
<dbReference type="GO" id="GO:0009507">
    <property type="term" value="C:chloroplast"/>
    <property type="evidence" value="ECO:0007669"/>
    <property type="project" value="UniProtKB-SubCell"/>
</dbReference>
<dbReference type="GO" id="GO:1990904">
    <property type="term" value="C:ribonucleoprotein complex"/>
    <property type="evidence" value="ECO:0007669"/>
    <property type="project" value="UniProtKB-KW"/>
</dbReference>
<dbReference type="GO" id="GO:0005840">
    <property type="term" value="C:ribosome"/>
    <property type="evidence" value="ECO:0007669"/>
    <property type="project" value="UniProtKB-KW"/>
</dbReference>
<dbReference type="GO" id="GO:0003735">
    <property type="term" value="F:structural constituent of ribosome"/>
    <property type="evidence" value="ECO:0007669"/>
    <property type="project" value="InterPro"/>
</dbReference>
<dbReference type="GO" id="GO:0006412">
    <property type="term" value="P:translation"/>
    <property type="evidence" value="ECO:0007669"/>
    <property type="project" value="UniProtKB-UniRule"/>
</dbReference>
<dbReference type="CDD" id="cd00677">
    <property type="entry name" value="S15_NS1_EPRS_RNA-bind"/>
    <property type="match status" value="1"/>
</dbReference>
<dbReference type="Gene3D" id="1.10.287.10">
    <property type="entry name" value="S15/NS1, RNA-binding"/>
    <property type="match status" value="1"/>
</dbReference>
<dbReference type="HAMAP" id="MF_01343_B">
    <property type="entry name" value="Ribosomal_uS15_B"/>
    <property type="match status" value="1"/>
</dbReference>
<dbReference type="InterPro" id="IPR000589">
    <property type="entry name" value="Ribosomal_uS15"/>
</dbReference>
<dbReference type="InterPro" id="IPR005290">
    <property type="entry name" value="Ribosomal_uS15_bac-type"/>
</dbReference>
<dbReference type="InterPro" id="IPR009068">
    <property type="entry name" value="uS15_NS1_RNA-bd_sf"/>
</dbReference>
<dbReference type="NCBIfam" id="TIGR00952">
    <property type="entry name" value="S15_bact"/>
    <property type="match status" value="1"/>
</dbReference>
<dbReference type="PANTHER" id="PTHR23321">
    <property type="entry name" value="RIBOSOMAL PROTEIN S15, BACTERIAL AND ORGANELLAR"/>
    <property type="match status" value="1"/>
</dbReference>
<dbReference type="PANTHER" id="PTHR23321:SF26">
    <property type="entry name" value="SMALL RIBOSOMAL SUBUNIT PROTEIN US15M"/>
    <property type="match status" value="1"/>
</dbReference>
<dbReference type="Pfam" id="PF00312">
    <property type="entry name" value="Ribosomal_S15"/>
    <property type="match status" value="1"/>
</dbReference>
<dbReference type="SMART" id="SM01387">
    <property type="entry name" value="Ribosomal_S15"/>
    <property type="match status" value="1"/>
</dbReference>
<dbReference type="SUPFAM" id="SSF47060">
    <property type="entry name" value="S15/NS1 RNA-binding domain"/>
    <property type="match status" value="1"/>
</dbReference>
<dbReference type="PROSITE" id="PS00362">
    <property type="entry name" value="RIBOSOMAL_S15"/>
    <property type="match status" value="1"/>
</dbReference>
<gene>
    <name type="primary">rps15</name>
</gene>
<reference key="1">
    <citation type="journal article" date="2006" name="Mol. Biol. Evol.">
        <title>The chloroplast genome of Phalaenopsis aphrodite (Orchidaceae): comparative analysis of evolutionary rate with that of grasses and its phylogenetic implications.</title>
        <authorList>
            <person name="Chang C.-C."/>
            <person name="Lin H.-C."/>
            <person name="Lin I.-P."/>
            <person name="Chow T.-Y."/>
            <person name="Chen H.-H."/>
            <person name="Chen W.-H."/>
            <person name="Cheng C.-H."/>
            <person name="Lin C.-Y."/>
            <person name="Liu S.-M."/>
            <person name="Chang C.-C."/>
            <person name="Chaw S.-M."/>
        </authorList>
    </citation>
    <scope>NUCLEOTIDE SEQUENCE [LARGE SCALE GENOMIC DNA]</scope>
    <source>
        <strain>cv. Taisugar TS-97</strain>
    </source>
</reference>
<evidence type="ECO:0000250" key="1"/>
<evidence type="ECO:0000305" key="2"/>
<protein>
    <recommendedName>
        <fullName evidence="2">Small ribosomal subunit protein uS15c</fullName>
    </recommendedName>
    <alternativeName>
        <fullName>30S ribosomal protein S15, chloroplastic</fullName>
    </alternativeName>
</protein>
<geneLocation type="chloroplast"/>
<feature type="chain" id="PRO_0000115645" description="Small ribosomal subunit protein uS15c">
    <location>
        <begin position="1"/>
        <end position="91"/>
    </location>
</feature>
<organism>
    <name type="scientific">Phalaenopsis aphrodite subsp. formosana</name>
    <name type="common">Moth orchid</name>
    <dbReference type="NCBI Taxonomy" id="308872"/>
    <lineage>
        <taxon>Eukaryota</taxon>
        <taxon>Viridiplantae</taxon>
        <taxon>Streptophyta</taxon>
        <taxon>Embryophyta</taxon>
        <taxon>Tracheophyta</taxon>
        <taxon>Spermatophyta</taxon>
        <taxon>Magnoliopsida</taxon>
        <taxon>Liliopsida</taxon>
        <taxon>Asparagales</taxon>
        <taxon>Orchidaceae</taxon>
        <taxon>Epidendroideae</taxon>
        <taxon>Vandeae</taxon>
        <taxon>Aeridinae</taxon>
        <taxon>Phalaenopsis</taxon>
    </lineage>
</organism>
<comment type="subunit">
    <text evidence="1">Part of the 30S ribosomal subunit.</text>
</comment>
<comment type="subcellular location">
    <subcellularLocation>
        <location>Plastid</location>
        <location>Chloroplast</location>
    </subcellularLocation>
</comment>
<comment type="similarity">
    <text evidence="2">Belongs to the universal ribosomal protein uS15 family.</text>
</comment>
<keyword id="KW-0150">Chloroplast</keyword>
<keyword id="KW-0934">Plastid</keyword>
<keyword id="KW-0687">Ribonucleoprotein</keyword>
<keyword id="KW-0689">Ribosomal protein</keyword>